<comment type="function">
    <text evidence="3">Variable subunit of the ferredoxin-thioredoxin reductase (FTR), which catalyzes the two-electron reduction of thioredoxins by the electrons provided by reduced ferredoxin.</text>
</comment>
<comment type="subunit">
    <text evidence="2 3">Heterodimer of subunit A (variable subunit) and subunit B (catalytic subunit). Heterodimeric FTR forms a complex with ferredoxin and thioredoxin.</text>
</comment>
<comment type="interaction">
    <interactant intactId="EBI-863219">
        <id>Q55781</id>
    </interactant>
    <interactant intactId="EBI-863211">
        <id>Q55389</id>
        <label>ftrC</label>
    </interactant>
    <organismsDiffer>false</organismsDiffer>
    <experiments>4</experiments>
</comment>
<comment type="interaction">
    <interactant intactId="EBI-863219">
        <id>Q55781</id>
    </interactant>
    <interactant intactId="EBI-863421">
        <id>P27320</id>
        <label>petF</label>
    </interactant>
    <organismsDiffer>false</organismsDiffer>
    <experiments>4</experiments>
</comment>
<comment type="similarity">
    <text evidence="4">Belongs to the ferredoxin thioredoxin reductase alpha subunit family.</text>
</comment>
<proteinExistence type="evidence at protein level"/>
<evidence type="ECO:0000250" key="1"/>
<evidence type="ECO:0000269" key="2">
    <source>
    </source>
</evidence>
<evidence type="ECO:0000269" key="3">
    <source>
    </source>
</evidence>
<evidence type="ECO:0000305" key="4"/>
<evidence type="ECO:0007829" key="5">
    <source>
        <dbReference type="PDB" id="1DJ7"/>
    </source>
</evidence>
<evidence type="ECO:0007829" key="6">
    <source>
        <dbReference type="PDB" id="2PUO"/>
    </source>
</evidence>
<protein>
    <recommendedName>
        <fullName>Ferredoxin-thioredoxin reductase, variable chain</fullName>
        <shortName>FTR-V</shortName>
    </recommendedName>
    <alternativeName>
        <fullName>Ferredoxin-thioredoxin reductase subunit A</fullName>
        <shortName>FTR-A</shortName>
    </alternativeName>
</protein>
<keyword id="KW-0002">3D-structure</keyword>
<keyword id="KW-0903">Direct protein sequencing</keyword>
<keyword id="KW-0560">Oxidoreductase</keyword>
<keyword id="KW-1185">Reference proteome</keyword>
<feature type="chain" id="PRO_0000087366" description="Ferredoxin-thioredoxin reductase, variable chain">
    <location>
        <begin position="1"/>
        <end position="75"/>
    </location>
</feature>
<feature type="region of interest" description="Interaction with ferredoxin" evidence="1">
    <location>
        <begin position="43"/>
        <end position="46"/>
    </location>
</feature>
<feature type="strand" evidence="5">
    <location>
        <begin position="6"/>
        <end position="9"/>
    </location>
</feature>
<feature type="strand" evidence="5">
    <location>
        <begin position="14"/>
        <end position="16"/>
    </location>
</feature>
<feature type="helix" evidence="6">
    <location>
        <begin position="19"/>
        <end position="21"/>
    </location>
</feature>
<feature type="strand" evidence="5">
    <location>
        <begin position="32"/>
        <end position="38"/>
    </location>
</feature>
<feature type="strand" evidence="5">
    <location>
        <begin position="40"/>
        <end position="42"/>
    </location>
</feature>
<feature type="strand" evidence="5">
    <location>
        <begin position="53"/>
        <end position="57"/>
    </location>
</feature>
<feature type="turn" evidence="5">
    <location>
        <begin position="58"/>
        <end position="60"/>
    </location>
</feature>
<feature type="strand" evidence="5">
    <location>
        <begin position="61"/>
        <end position="65"/>
    </location>
</feature>
<feature type="helix" evidence="5">
    <location>
        <begin position="67"/>
        <end position="69"/>
    </location>
</feature>
<feature type="strand" evidence="5">
    <location>
        <begin position="70"/>
        <end position="72"/>
    </location>
</feature>
<dbReference type="EMBL" id="BA000022">
    <property type="protein sequence ID" value="BAA10432.1"/>
    <property type="molecule type" value="Genomic_DNA"/>
</dbReference>
<dbReference type="PIR" id="S76586">
    <property type="entry name" value="S76586"/>
</dbReference>
<dbReference type="PDB" id="1DJ7">
    <property type="method" value="X-ray"/>
    <property type="resolution" value="1.60 A"/>
    <property type="chains" value="B=1-75"/>
</dbReference>
<dbReference type="PDB" id="2PU9">
    <property type="method" value="X-ray"/>
    <property type="resolution" value="1.65 A"/>
    <property type="chains" value="B=1-74"/>
</dbReference>
<dbReference type="PDB" id="2PUK">
    <property type="method" value="X-ray"/>
    <property type="resolution" value="3.00 A"/>
    <property type="chains" value="B/F=1-73"/>
</dbReference>
<dbReference type="PDB" id="2PUO">
    <property type="method" value="X-ray"/>
    <property type="resolution" value="1.70 A"/>
    <property type="chains" value="B=1-73"/>
</dbReference>
<dbReference type="PDB" id="2PVD">
    <property type="method" value="X-ray"/>
    <property type="resolution" value="1.95 A"/>
    <property type="chains" value="B=1-73"/>
</dbReference>
<dbReference type="PDB" id="2PVG">
    <property type="method" value="X-ray"/>
    <property type="resolution" value="2.40 A"/>
    <property type="chains" value="B=1-73"/>
</dbReference>
<dbReference type="PDB" id="2PVO">
    <property type="method" value="X-ray"/>
    <property type="resolution" value="3.40 A"/>
    <property type="chains" value="B=1-74"/>
</dbReference>
<dbReference type="PDBsum" id="1DJ7"/>
<dbReference type="PDBsum" id="2PU9"/>
<dbReference type="PDBsum" id="2PUK"/>
<dbReference type="PDBsum" id="2PUO"/>
<dbReference type="PDBsum" id="2PVD"/>
<dbReference type="PDBsum" id="2PVG"/>
<dbReference type="PDBsum" id="2PVO"/>
<dbReference type="SMR" id="Q55781"/>
<dbReference type="DIP" id="DIP-35306N"/>
<dbReference type="IntAct" id="Q55781">
    <property type="interactions" value="2"/>
</dbReference>
<dbReference type="MINT" id="Q55781"/>
<dbReference type="STRING" id="1148.gene:10499933"/>
<dbReference type="PaxDb" id="1148-1001695"/>
<dbReference type="EnsemblBacteria" id="BAA10432">
    <property type="protein sequence ID" value="BAA10432"/>
    <property type="gene ID" value="BAA10432"/>
</dbReference>
<dbReference type="KEGG" id="syn:ssr0330"/>
<dbReference type="eggNOG" id="ENOG5032ZFB">
    <property type="taxonomic scope" value="Bacteria"/>
</dbReference>
<dbReference type="InParanoid" id="Q55781"/>
<dbReference type="PhylomeDB" id="Q55781"/>
<dbReference type="BioCyc" id="MetaCyc:MONOMER-14462"/>
<dbReference type="EvolutionaryTrace" id="Q55781"/>
<dbReference type="Proteomes" id="UP000001425">
    <property type="component" value="Chromosome"/>
</dbReference>
<dbReference type="GO" id="GO:0016491">
    <property type="term" value="F:oxidoreductase activity"/>
    <property type="evidence" value="ECO:0007669"/>
    <property type="project" value="UniProtKB-KW"/>
</dbReference>
<dbReference type="GO" id="GO:0015979">
    <property type="term" value="P:photosynthesis"/>
    <property type="evidence" value="ECO:0007669"/>
    <property type="project" value="InterPro"/>
</dbReference>
<dbReference type="FunFam" id="2.30.30.50:FF:000003">
    <property type="entry name" value="Ferredoxin-thioredoxin reductase, variable chain"/>
    <property type="match status" value="1"/>
</dbReference>
<dbReference type="Gene3D" id="2.30.30.50">
    <property type="match status" value="1"/>
</dbReference>
<dbReference type="InterPro" id="IPR008990">
    <property type="entry name" value="Elect_transpt_acc-like_dom_sf"/>
</dbReference>
<dbReference type="InterPro" id="IPR004207">
    <property type="entry name" value="Fd_thioredoxin_Rdtase_alpha"/>
</dbReference>
<dbReference type="InterPro" id="IPR044166">
    <property type="entry name" value="FTRV"/>
</dbReference>
<dbReference type="PANTHER" id="PTHR46937:SF4">
    <property type="entry name" value="FERREDOXIN-THIOREDOXIN REDUCTASE SUBUNIT A1, CHLOROPLASTIC"/>
    <property type="match status" value="1"/>
</dbReference>
<dbReference type="PANTHER" id="PTHR46937">
    <property type="entry name" value="FERREDOXIN-THIOREDOXIN REDUCTASE, VARIABLE CHAIN"/>
    <property type="match status" value="1"/>
</dbReference>
<dbReference type="Pfam" id="PF02941">
    <property type="entry name" value="FeThRed_A"/>
    <property type="match status" value="1"/>
</dbReference>
<dbReference type="SUPFAM" id="SSF50090">
    <property type="entry name" value="Electron transport accessory proteins"/>
    <property type="match status" value="1"/>
</dbReference>
<organism>
    <name type="scientific">Synechocystis sp. (strain ATCC 27184 / PCC 6803 / Kazusa)</name>
    <dbReference type="NCBI Taxonomy" id="1111708"/>
    <lineage>
        <taxon>Bacteria</taxon>
        <taxon>Bacillati</taxon>
        <taxon>Cyanobacteriota</taxon>
        <taxon>Cyanophyceae</taxon>
        <taxon>Synechococcales</taxon>
        <taxon>Merismopediaceae</taxon>
        <taxon>Synechocystis</taxon>
    </lineage>
</organism>
<gene>
    <name type="primary">ftrV</name>
    <name type="ordered locus">ssr0330</name>
</gene>
<reference key="1">
    <citation type="journal article" date="1995" name="DNA Res.">
        <title>Sequence analysis of the genome of the unicellular cyanobacterium Synechocystis sp. strain PCC6803. I. Sequence features in the 1 Mb region from map positions 64% to 92% of the genome.</title>
        <authorList>
            <person name="Kaneko T."/>
            <person name="Tanaka A."/>
            <person name="Sato S."/>
            <person name="Kotani H."/>
            <person name="Sazuka T."/>
            <person name="Miyajima N."/>
            <person name="Sugiura M."/>
            <person name="Tabata S."/>
        </authorList>
    </citation>
    <scope>NUCLEOTIDE SEQUENCE [LARGE SCALE GENOMIC DNA]</scope>
    <source>
        <strain>ATCC 27184 / PCC 6803 / N-1</strain>
    </source>
</reference>
<reference key="2">
    <citation type="journal article" date="1996" name="DNA Res.">
        <title>Sequence analysis of the genome of the unicellular cyanobacterium Synechocystis sp. strain PCC6803. II. Sequence determination of the entire genome and assignment of potential protein-coding regions.</title>
        <authorList>
            <person name="Kaneko T."/>
            <person name="Sato S."/>
            <person name="Kotani H."/>
            <person name="Tanaka A."/>
            <person name="Asamizu E."/>
            <person name="Nakamura Y."/>
            <person name="Miyajima N."/>
            <person name="Hirosawa M."/>
            <person name="Sugiura M."/>
            <person name="Sasamoto S."/>
            <person name="Kimura T."/>
            <person name="Hosouchi T."/>
            <person name="Matsuno A."/>
            <person name="Muraki A."/>
            <person name="Nakazaki N."/>
            <person name="Naruo K."/>
            <person name="Okumura S."/>
            <person name="Shimpo S."/>
            <person name="Takeuchi C."/>
            <person name="Wada T."/>
            <person name="Watanabe A."/>
            <person name="Yamada M."/>
            <person name="Yasuda M."/>
            <person name="Tabata S."/>
        </authorList>
    </citation>
    <scope>NUCLEOTIDE SEQUENCE [LARGE SCALE GENOMIC DNA]</scope>
    <source>
        <strain>ATCC 27184 / PCC 6803 / Kazusa</strain>
    </source>
</reference>
<reference key="3">
    <citation type="journal article" date="1997" name="Electrophoresis">
        <title>Towards a proteome project of cyanobacterium Synechocystis sp. strain PCC6803: linking 130 protein spots with their respective genes.</title>
        <authorList>
            <person name="Sazuka T."/>
            <person name="Ohara O."/>
        </authorList>
    </citation>
    <scope>PROTEIN SEQUENCE OF 1-7</scope>
</reference>
<reference key="4">
    <citation type="journal article" date="2000" name="Science">
        <title>Redox signaling in chloroplasts: cleavage of disulfides by an iron-sulfur cluster.</title>
        <authorList>
            <person name="Dai S."/>
            <person name="Schwendtmayer C."/>
            <person name="Schurmann P."/>
            <person name="Ramaswamy S."/>
            <person name="Eklund H."/>
        </authorList>
    </citation>
    <scope>X-RAY CRYSTALLOGRAPHY (1.60 ANGSTROMS) IN COMPLEX WITH FTRC</scope>
    <scope>SUBUNIT</scope>
    <source>
        <strain>ATCC 27184 / PCC 6803 / N-1</strain>
    </source>
</reference>
<reference key="5">
    <citation type="journal article" date="2007" name="Nature">
        <title>Structural snapshots along the reaction pathway of ferredoxin-thioredoxin reductase.</title>
        <authorList>
            <person name="Dai S."/>
            <person name="Friemann R."/>
            <person name="Glauser D.A."/>
            <person name="Bourquin F."/>
            <person name="Manieri W."/>
            <person name="Schurmann P."/>
            <person name="Eklund H."/>
        </authorList>
    </citation>
    <scope>X-RAY CRYSTALLOGRAPHY (1.65 ANGSTROMS) OF 1-74 IN COMPLEXES WITH FTRC; PETF/FERREDOXIN; TRX-F AND TRX-M</scope>
    <scope>FUNCTION</scope>
    <scope>SUBUNIT</scope>
    <source>
        <strain>ATCC 27184 / PCC 6803 / N-1</strain>
    </source>
</reference>
<name>FTRV_SYNY3</name>
<accession>Q55781</accession>
<sequence>MNVGDRVRVTSSVVVYHHPEHKKTAFDLQGMEGEVAAVLTEWQGRPISANLPVLVKFEQRFKAHFRPDEVTLIED</sequence>